<evidence type="ECO:0000250" key="1"/>
<evidence type="ECO:0000250" key="2">
    <source>
        <dbReference type="UniProtKB" id="P51530"/>
    </source>
</evidence>
<evidence type="ECO:0000255" key="3"/>
<evidence type="ECO:0000303" key="4">
    <source>
    </source>
</evidence>
<evidence type="ECO:0000305" key="5"/>
<evidence type="ECO:0007829" key="6">
    <source>
        <dbReference type="PDB" id="5EAN"/>
    </source>
</evidence>
<evidence type="ECO:0007829" key="7">
    <source>
        <dbReference type="PDB" id="5EAW"/>
    </source>
</evidence>
<evidence type="ECO:0007829" key="8">
    <source>
        <dbReference type="PDB" id="5EAX"/>
    </source>
</evidence>
<sequence>MEPLDELDLLLLEEDGGAEAVPRVELLRKKADALFPETVLSRGVDNRYLVLAVETSQNERGAEEKRLHVTASQDREHEVLCILRNGWSSVPVEPGDIVHLEGDCTSEPWIIDDDFGYFILYPDMMISGTSVASSIRCLRRAVLSETFRGSDPATRQMLIGTILHEVFQKAISESFAPERLQELALQTLREVRHLKEMYRLNLSQDEILCEVEEYLPSFSKWAEDFMRKGPSSEFPQMQLSLPSDGSNRSSPCNIEVVKSLDIEESIWSPRFGLKGKIDVTVGVKIHRDCKMKYKVMPLELKTGKESNSIEHRSQVVLYTLLSQERREDPEAGWLLYLKTGQMYPVPANHLDKRELLKLRNWLAASLLHRVSRAAPGEEARLSALPQIIEEEKTCKYCSQIGNCALYSRAVEEQGDDASIPEAMLSKIQEETRHLQLAHLKYFSLWCLMLTLESQSKDNRKTHQSIWLTPASELEESGNCVGNLVRTEPVSRVCDGQYLHNFQRKNGPMPATNLMAGDRIILSGEERKLFALSKGYVKKMNKAAVTCLLDRNLSTLPATTVFRLDREERHGDISTPLGNLSKLMESTDPSKRLRELIIDFREPQFIAYLSSVLPHDAKDTVANILKGLNKPQRQAMKRVLLSKDYTLIVGMPGTGKTTTICALVRILSACGFSVLLTSYTHSAVDNILLKLAKFKVGFLRLGQSHKVHPDIQKFTEEEICRSRSIASLAHLEELYNSHPIVATTCMGINHPIFSRKTFDFCIVDEASQISQPVCLGPLFFSRRFVLVGDHQQLPPLVVNREARALGMSESLFKRLERNESAVVQLTVQYRMNRKIMSLSNKLTYAGKLECGSDRVANAVLALPNLKDARLSLQLYADYSDSPWLAGVLEPDNPVCFLNTDKVPAPEQVENGGVSNVTEARLIVFLTSTFIKAGCSPSDIGVIAPYRQQLRIISDLLARSSVGMVEVNTVDKYQGRDKSLILVSFVRSNEDGTLGELLKDWRRLNVALTRAKHKLILLGSVSSLKRFPPLGTLFDHLNAEQLILDLPSREHESLSHILGDCQRD</sequence>
<comment type="function">
    <text evidence="2">Key enzyme involved in DNA replication and DNA repair in nucleus and mitochondrion. Involved in Okazaki fragments processing by cleaving long flaps that escape FEN1: flaps that are longer than 27 nucleotides are coated by replication protein A complex (RPA), leading to recruit DNA2 which cleaves the flap until it is too short to bind RPA and becomes a substrate for FEN1. Also involved in 5'-end resection of DNA during double-strand break (DSB) repair: recruited by BLM and mediates the cleavage of 5'-ssDNA, while the 3'-ssDNA cleavage is prevented by the presence of RPA. Also involved in DNA replication checkpoint independently of Okazaki fragments processing. Possesses different enzymatic activities, such as single-stranded DNA (ssDNA)-dependent ATPase, 5'-3' helicase and endonuclease activities. While the ATPase and endonuclease activities are well-defined and play a key role in Okazaki fragments processing and DSB repair, the 5'-3' DNA helicase activity is subject to debate. According to various reports, the helicase activity is weak and its function remains largely unclear. Helicase activity may promote the motion of DNA2 on the flap, helping the nuclease function (By similarity).</text>
</comment>
<comment type="catalytic activity">
    <reaction>
        <text>ATP + H2O = ADP + phosphate + H(+)</text>
        <dbReference type="Rhea" id="RHEA:13065"/>
        <dbReference type="ChEBI" id="CHEBI:15377"/>
        <dbReference type="ChEBI" id="CHEBI:15378"/>
        <dbReference type="ChEBI" id="CHEBI:30616"/>
        <dbReference type="ChEBI" id="CHEBI:43474"/>
        <dbReference type="ChEBI" id="CHEBI:456216"/>
        <dbReference type="EC" id="3.6.4.12"/>
    </reaction>
</comment>
<comment type="cofactor">
    <cofactor evidence="1">
        <name>[4Fe-4S] cluster</name>
        <dbReference type="ChEBI" id="CHEBI:49883"/>
    </cofactor>
    <text evidence="1">Binds 1 [4Fe-4S] cluster.</text>
</comment>
<comment type="subunit">
    <text evidence="1">Interacts with BLM and WDHD1.</text>
</comment>
<comment type="interaction">
    <interactant intactId="EBI-6919222">
        <id>Q6ZQJ5</id>
    </interactant>
    <interactant intactId="EBI-6919183">
        <id>P70371</id>
        <label>Terf1</label>
    </interactant>
    <organismsDiffer>false</organismsDiffer>
    <experiments>4</experiments>
</comment>
<comment type="interaction">
    <interactant intactId="EBI-6919222">
        <id>Q6ZQJ5</id>
    </interactant>
    <interactant intactId="EBI-6919263">
        <id>O35144</id>
        <label>Terf2</label>
    </interactant>
    <organismsDiffer>false</organismsDiffer>
    <experiments>4</experiments>
</comment>
<comment type="subcellular location">
    <subcellularLocation>
        <location evidence="2">Nucleus</location>
    </subcellularLocation>
    <subcellularLocation>
        <location evidence="2">Mitochondrion</location>
    </subcellularLocation>
</comment>
<comment type="alternative products">
    <event type="alternative splicing"/>
    <isoform>
        <id>Q6ZQJ5-1</id>
        <name>1</name>
        <sequence type="displayed"/>
    </isoform>
    <isoform>
        <id>Q6ZQJ5-2</id>
        <name>2</name>
        <sequence type="described" ref="VSP_021872 VSP_021873"/>
    </isoform>
</comment>
<comment type="PTM">
    <text evidence="1">Acetylated by EP300, leading to stimulate the 5'-3' endonuclease, the 5'-3' helicase and DNA-dependent ATPase activities, possibly by increasing DNA substrate affinity.</text>
</comment>
<comment type="similarity">
    <text evidence="5">Belongs to the DNA2/NAM7 helicase family.</text>
</comment>
<comment type="sequence caution" evidence="5">
    <conflict type="erroneous initiation">
        <sequence resource="EMBL-CDS" id="BAC97861"/>
    </conflict>
</comment>
<dbReference type="EC" id="3.1.-.-"/>
<dbReference type="EC" id="3.6.4.12"/>
<dbReference type="EMBL" id="AK129051">
    <property type="protein sequence ID" value="BAC97861.1"/>
    <property type="status" value="ALT_INIT"/>
    <property type="molecule type" value="mRNA"/>
</dbReference>
<dbReference type="EMBL" id="AK028381">
    <property type="protein sequence ID" value="BAC25919.1"/>
    <property type="molecule type" value="mRNA"/>
</dbReference>
<dbReference type="EMBL" id="BC025182">
    <property type="protein sequence ID" value="AAH25182.1"/>
    <property type="molecule type" value="mRNA"/>
</dbReference>
<dbReference type="EMBL" id="BC115716">
    <property type="protein sequence ID" value="AAI15717.1"/>
    <property type="molecule type" value="mRNA"/>
</dbReference>
<dbReference type="CCDS" id="CCDS35923.1">
    <molecule id="Q6ZQJ5-1"/>
</dbReference>
<dbReference type="RefSeq" id="NP_796346.2">
    <molecule id="Q6ZQJ5-1"/>
    <property type="nucleotide sequence ID" value="NM_177372.3"/>
</dbReference>
<dbReference type="RefSeq" id="XP_036011717.1">
    <molecule id="Q6ZQJ5-2"/>
    <property type="nucleotide sequence ID" value="XM_036155824.1"/>
</dbReference>
<dbReference type="PDB" id="5EAN">
    <property type="method" value="X-ray"/>
    <property type="resolution" value="2.36 A"/>
    <property type="chains" value="A=1-1056"/>
</dbReference>
<dbReference type="PDB" id="5EAW">
    <property type="method" value="X-ray"/>
    <property type="resolution" value="3.00 A"/>
    <property type="chains" value="A/B=1-1056"/>
</dbReference>
<dbReference type="PDB" id="5EAX">
    <property type="method" value="X-ray"/>
    <property type="resolution" value="3.05 A"/>
    <property type="chains" value="A/B=1-1056"/>
</dbReference>
<dbReference type="PDBsum" id="5EAN"/>
<dbReference type="PDBsum" id="5EAW"/>
<dbReference type="PDBsum" id="5EAX"/>
<dbReference type="SMR" id="Q6ZQJ5"/>
<dbReference type="BioGRID" id="236484">
    <property type="interactions" value="5"/>
</dbReference>
<dbReference type="FunCoup" id="Q6ZQJ5">
    <property type="interactions" value="2792"/>
</dbReference>
<dbReference type="IntAct" id="Q6ZQJ5">
    <property type="interactions" value="2"/>
</dbReference>
<dbReference type="MINT" id="Q6ZQJ5"/>
<dbReference type="STRING" id="10090.ENSMUSP00000115750"/>
<dbReference type="GlyGen" id="Q6ZQJ5">
    <property type="glycosylation" value="1 site, 1 O-linked glycan (1 site)"/>
</dbReference>
<dbReference type="iPTMnet" id="Q6ZQJ5"/>
<dbReference type="PhosphoSitePlus" id="Q6ZQJ5"/>
<dbReference type="PaxDb" id="10090-ENSMUSP00000115750"/>
<dbReference type="PeptideAtlas" id="Q6ZQJ5"/>
<dbReference type="ProteomicsDB" id="279738">
    <molecule id="Q6ZQJ5-1"/>
</dbReference>
<dbReference type="ProteomicsDB" id="279739">
    <molecule id="Q6ZQJ5-2"/>
</dbReference>
<dbReference type="Antibodypedia" id="28503">
    <property type="antibodies" value="145 antibodies from 26 providers"/>
</dbReference>
<dbReference type="DNASU" id="327762"/>
<dbReference type="Ensembl" id="ENSMUST00000092462.12">
    <molecule id="Q6ZQJ5-2"/>
    <property type="protein sequence ID" value="ENSMUSP00000090119.6"/>
    <property type="gene ID" value="ENSMUSG00000036875.16"/>
</dbReference>
<dbReference type="Ensembl" id="ENSMUST00000131422.8">
    <molecule id="Q6ZQJ5-1"/>
    <property type="protein sequence ID" value="ENSMUSP00000115750.2"/>
    <property type="gene ID" value="ENSMUSG00000036875.16"/>
</dbReference>
<dbReference type="GeneID" id="327762"/>
<dbReference type="KEGG" id="mmu:327762"/>
<dbReference type="UCSC" id="uc007fji.2">
    <molecule id="Q6ZQJ5-1"/>
    <property type="organism name" value="mouse"/>
</dbReference>
<dbReference type="AGR" id="MGI:2443732"/>
<dbReference type="CTD" id="1763"/>
<dbReference type="MGI" id="MGI:2443732">
    <property type="gene designation" value="Dna2"/>
</dbReference>
<dbReference type="VEuPathDB" id="HostDB:ENSMUSG00000036875"/>
<dbReference type="eggNOG" id="KOG1805">
    <property type="taxonomic scope" value="Eukaryota"/>
</dbReference>
<dbReference type="GeneTree" id="ENSGT00780000122010"/>
<dbReference type="HOGENOM" id="CLU_001666_2_0_1"/>
<dbReference type="InParanoid" id="Q6ZQJ5"/>
<dbReference type="OMA" id="NYCEAAI"/>
<dbReference type="OrthoDB" id="306218at2759"/>
<dbReference type="PhylomeDB" id="Q6ZQJ5"/>
<dbReference type="TreeFam" id="TF314903"/>
<dbReference type="Reactome" id="R-MMU-174437">
    <property type="pathway name" value="Removal of the Flap Intermediate from the C-strand"/>
</dbReference>
<dbReference type="Reactome" id="R-MMU-5685938">
    <property type="pathway name" value="HDR through Single Strand Annealing (SSA)"/>
</dbReference>
<dbReference type="Reactome" id="R-MMU-5685942">
    <property type="pathway name" value="HDR through Homologous Recombination (HRR)"/>
</dbReference>
<dbReference type="Reactome" id="R-MMU-5693568">
    <property type="pathway name" value="Resolution of D-loop Structures through Holliday Junction Intermediates"/>
</dbReference>
<dbReference type="Reactome" id="R-MMU-5693579">
    <property type="pathway name" value="Homologous DNA Pairing and Strand Exchange"/>
</dbReference>
<dbReference type="Reactome" id="R-MMU-5693607">
    <property type="pathway name" value="Processing of DNA double-strand break ends"/>
</dbReference>
<dbReference type="Reactome" id="R-MMU-5693616">
    <property type="pathway name" value="Presynaptic phase of homologous DNA pairing and strand exchange"/>
</dbReference>
<dbReference type="Reactome" id="R-MMU-6804756">
    <property type="pathway name" value="Regulation of TP53 Activity through Phosphorylation"/>
</dbReference>
<dbReference type="Reactome" id="R-MMU-69166">
    <property type="pathway name" value="Removal of the Flap Intermediate"/>
</dbReference>
<dbReference type="Reactome" id="R-MMU-69473">
    <property type="pathway name" value="G2/M DNA damage checkpoint"/>
</dbReference>
<dbReference type="BioGRID-ORCS" id="327762">
    <property type="hits" value="25 hits in 116 CRISPR screens"/>
</dbReference>
<dbReference type="ChiTaRS" id="Dna2">
    <property type="organism name" value="mouse"/>
</dbReference>
<dbReference type="EvolutionaryTrace" id="Q6ZQJ5"/>
<dbReference type="PRO" id="PR:Q6ZQJ5"/>
<dbReference type="Proteomes" id="UP000000589">
    <property type="component" value="Chromosome 10"/>
</dbReference>
<dbReference type="RNAct" id="Q6ZQJ5">
    <property type="molecule type" value="protein"/>
</dbReference>
<dbReference type="Bgee" id="ENSMUSG00000036875">
    <property type="expression patterns" value="Expressed in fetal liver hematopoietic progenitor cell and 197 other cell types or tissues"/>
</dbReference>
<dbReference type="GO" id="GO:0000781">
    <property type="term" value="C:chromosome, telomeric region"/>
    <property type="evidence" value="ECO:0000314"/>
    <property type="project" value="BHF-UCL"/>
</dbReference>
<dbReference type="GO" id="GO:0005760">
    <property type="term" value="C:gamma DNA polymerase complex"/>
    <property type="evidence" value="ECO:0007669"/>
    <property type="project" value="Ensembl"/>
</dbReference>
<dbReference type="GO" id="GO:0042645">
    <property type="term" value="C:mitochondrial nucleoid"/>
    <property type="evidence" value="ECO:0007669"/>
    <property type="project" value="Ensembl"/>
</dbReference>
<dbReference type="GO" id="GO:0005654">
    <property type="term" value="C:nucleoplasm"/>
    <property type="evidence" value="ECO:0007669"/>
    <property type="project" value="Ensembl"/>
</dbReference>
<dbReference type="GO" id="GO:0051539">
    <property type="term" value="F:4 iron, 4 sulfur cluster binding"/>
    <property type="evidence" value="ECO:0007669"/>
    <property type="project" value="UniProtKB-KW"/>
</dbReference>
<dbReference type="GO" id="GO:0043139">
    <property type="term" value="F:5'-3' DNA helicase activity"/>
    <property type="evidence" value="ECO:0000250"/>
    <property type="project" value="UniProtKB"/>
</dbReference>
<dbReference type="GO" id="GO:0017108">
    <property type="term" value="F:5'-flap endonuclease activity"/>
    <property type="evidence" value="ECO:0000314"/>
    <property type="project" value="BHF-UCL"/>
</dbReference>
<dbReference type="GO" id="GO:0005524">
    <property type="term" value="F:ATP binding"/>
    <property type="evidence" value="ECO:0007669"/>
    <property type="project" value="UniProtKB-KW"/>
</dbReference>
<dbReference type="GO" id="GO:0016887">
    <property type="term" value="F:ATP hydrolysis activity"/>
    <property type="evidence" value="ECO:0000250"/>
    <property type="project" value="UniProtKB"/>
</dbReference>
<dbReference type="GO" id="GO:0003677">
    <property type="term" value="F:DNA binding"/>
    <property type="evidence" value="ECO:0000250"/>
    <property type="project" value="UniProtKB"/>
</dbReference>
<dbReference type="GO" id="GO:0046872">
    <property type="term" value="F:metal ion binding"/>
    <property type="evidence" value="ECO:0007669"/>
    <property type="project" value="UniProtKB-KW"/>
</dbReference>
<dbReference type="GO" id="GO:0004518">
    <property type="term" value="F:nuclease activity"/>
    <property type="evidence" value="ECO:0000250"/>
    <property type="project" value="UniProtKB"/>
</dbReference>
<dbReference type="GO" id="GO:0017116">
    <property type="term" value="F:single-stranded DNA helicase activity"/>
    <property type="evidence" value="ECO:0000250"/>
    <property type="project" value="UniProtKB"/>
</dbReference>
<dbReference type="GO" id="GO:0016890">
    <property type="term" value="F:site-specific endodeoxyribonuclease activity, specific for altered base"/>
    <property type="evidence" value="ECO:0000250"/>
    <property type="project" value="UniProtKB"/>
</dbReference>
<dbReference type="GO" id="GO:0006284">
    <property type="term" value="P:base-excision repair"/>
    <property type="evidence" value="ECO:0000250"/>
    <property type="project" value="UniProtKB"/>
</dbReference>
<dbReference type="GO" id="GO:0000729">
    <property type="term" value="P:DNA double-strand break processing"/>
    <property type="evidence" value="ECO:0000250"/>
    <property type="project" value="UniProtKB"/>
</dbReference>
<dbReference type="GO" id="GO:0006260">
    <property type="term" value="P:DNA replication"/>
    <property type="evidence" value="ECO:0000250"/>
    <property type="project" value="UniProtKB"/>
</dbReference>
<dbReference type="GO" id="GO:0000076">
    <property type="term" value="P:DNA replication checkpoint signaling"/>
    <property type="evidence" value="ECO:0000250"/>
    <property type="project" value="UniProtKB"/>
</dbReference>
<dbReference type="GO" id="GO:0033567">
    <property type="term" value="P:DNA replication, Okazaki fragment processing"/>
    <property type="evidence" value="ECO:0000250"/>
    <property type="project" value="UniProtKB"/>
</dbReference>
<dbReference type="GO" id="GO:0043137">
    <property type="term" value="P:DNA replication, removal of RNA primer"/>
    <property type="evidence" value="ECO:0000250"/>
    <property type="project" value="UniProtKB"/>
</dbReference>
<dbReference type="GO" id="GO:0043504">
    <property type="term" value="P:mitochondrial DNA repair"/>
    <property type="evidence" value="ECO:0007669"/>
    <property type="project" value="Ensembl"/>
</dbReference>
<dbReference type="GO" id="GO:0006264">
    <property type="term" value="P:mitochondrial DNA replication"/>
    <property type="evidence" value="ECO:0000250"/>
    <property type="project" value="UniProtKB"/>
</dbReference>
<dbReference type="GO" id="GO:1902990">
    <property type="term" value="P:mitotic telomere maintenance via semi-conservative replication"/>
    <property type="evidence" value="ECO:0000315"/>
    <property type="project" value="BHF-UCL"/>
</dbReference>
<dbReference type="GO" id="GO:0045740">
    <property type="term" value="P:positive regulation of DNA replication"/>
    <property type="evidence" value="ECO:0000250"/>
    <property type="project" value="UniProtKB"/>
</dbReference>
<dbReference type="GO" id="GO:0000723">
    <property type="term" value="P:telomere maintenance"/>
    <property type="evidence" value="ECO:0000315"/>
    <property type="project" value="BHF-UCL"/>
</dbReference>
<dbReference type="CDD" id="cd18041">
    <property type="entry name" value="DEXXQc_DNA2"/>
    <property type="match status" value="1"/>
</dbReference>
<dbReference type="CDD" id="cd22318">
    <property type="entry name" value="DNA2_N-like"/>
    <property type="match status" value="1"/>
</dbReference>
<dbReference type="CDD" id="cd18808">
    <property type="entry name" value="SF1_C_Upf1"/>
    <property type="match status" value="1"/>
</dbReference>
<dbReference type="FunFam" id="2.40.30.270:FF:000002">
    <property type="entry name" value="DNA replication ATP-dependent helicase/nuclease DNA2"/>
    <property type="match status" value="1"/>
</dbReference>
<dbReference type="FunFam" id="3.40.50.300:FF:000721">
    <property type="entry name" value="DNA replication ATP-dependent helicase/nuclease DNA2"/>
    <property type="match status" value="1"/>
</dbReference>
<dbReference type="FunFam" id="3.40.50.300:FF:000789">
    <property type="entry name" value="DNA replication ATP-dependent helicase/nuclease DNA2"/>
    <property type="match status" value="1"/>
</dbReference>
<dbReference type="FunFam" id="3.40.50.300:FF:000915">
    <property type="entry name" value="DNA replication ATP-dependent helicase/nuclease DNA2"/>
    <property type="match status" value="1"/>
</dbReference>
<dbReference type="Gene3D" id="3.90.320.10">
    <property type="match status" value="1"/>
</dbReference>
<dbReference type="Gene3D" id="3.40.50.300">
    <property type="entry name" value="P-loop containing nucleotide triphosphate hydrolases"/>
    <property type="match status" value="2"/>
</dbReference>
<dbReference type="InterPro" id="IPR026851">
    <property type="entry name" value="Dna2/JHS1_DEXXQ-box"/>
</dbReference>
<dbReference type="InterPro" id="IPR045055">
    <property type="entry name" value="DNA2/NAM7-like"/>
</dbReference>
<dbReference type="InterPro" id="IPR041679">
    <property type="entry name" value="DNA2/NAM7-like_C"/>
</dbReference>
<dbReference type="InterPro" id="IPR041677">
    <property type="entry name" value="DNA2/NAM7_AAA_11"/>
</dbReference>
<dbReference type="InterPro" id="IPR048459">
    <property type="entry name" value="DNA2_Rift"/>
</dbReference>
<dbReference type="InterPro" id="IPR014808">
    <property type="entry name" value="DNA_replication_fac_Dna2_N"/>
</dbReference>
<dbReference type="InterPro" id="IPR027417">
    <property type="entry name" value="P-loop_NTPase"/>
</dbReference>
<dbReference type="InterPro" id="IPR011604">
    <property type="entry name" value="PDDEXK-like_dom_sf"/>
</dbReference>
<dbReference type="InterPro" id="IPR047187">
    <property type="entry name" value="SF1_C_Upf1"/>
</dbReference>
<dbReference type="PANTHER" id="PTHR10887:SF433">
    <property type="entry name" value="DNA REPLICATION ATP-DEPENDENT HELICASE_NUCLEASE DNA2"/>
    <property type="match status" value="1"/>
</dbReference>
<dbReference type="PANTHER" id="PTHR10887">
    <property type="entry name" value="DNA2/NAM7 HELICASE FAMILY"/>
    <property type="match status" value="1"/>
</dbReference>
<dbReference type="Pfam" id="PF13086">
    <property type="entry name" value="AAA_11"/>
    <property type="match status" value="2"/>
</dbReference>
<dbReference type="Pfam" id="PF13087">
    <property type="entry name" value="AAA_12"/>
    <property type="match status" value="1"/>
</dbReference>
<dbReference type="Pfam" id="PF08696">
    <property type="entry name" value="Dna2"/>
    <property type="match status" value="1"/>
</dbReference>
<dbReference type="Pfam" id="PF21123">
    <property type="entry name" value="Dna2_Rift"/>
    <property type="match status" value="1"/>
</dbReference>
<dbReference type="SUPFAM" id="SSF52540">
    <property type="entry name" value="P-loop containing nucleoside triphosphate hydrolases"/>
    <property type="match status" value="1"/>
</dbReference>
<feature type="chain" id="PRO_0000263604" description="DNA replication ATP-dependent helicase/nuclease DNA2">
    <location>
        <begin position="1"/>
        <end position="1062"/>
    </location>
</feature>
<feature type="region of interest" description="Nuclease activity" evidence="1">
    <location>
        <begin position="82"/>
        <end position="520"/>
    </location>
</feature>
<feature type="region of interest" description="Helicase activity" evidence="1">
    <location>
        <begin position="521"/>
        <end position="1062"/>
    </location>
</feature>
<feature type="binding site" evidence="1">
    <location>
        <position position="137"/>
    </location>
    <ligand>
        <name>[4Fe-4S] cluster</name>
        <dbReference type="ChEBI" id="CHEBI:49883"/>
    </ligand>
</feature>
<feature type="binding site" evidence="1">
    <location>
        <position position="394"/>
    </location>
    <ligand>
        <name>[4Fe-4S] cluster</name>
        <dbReference type="ChEBI" id="CHEBI:49883"/>
    </ligand>
</feature>
<feature type="binding site" evidence="1">
    <location>
        <position position="397"/>
    </location>
    <ligand>
        <name>[4Fe-4S] cluster</name>
        <dbReference type="ChEBI" id="CHEBI:49883"/>
    </ligand>
</feature>
<feature type="binding site" evidence="1">
    <location>
        <position position="403"/>
    </location>
    <ligand>
        <name>[4Fe-4S] cluster</name>
        <dbReference type="ChEBI" id="CHEBI:49883"/>
    </ligand>
</feature>
<feature type="binding site" evidence="3">
    <location>
        <begin position="649"/>
        <end position="656"/>
    </location>
    <ligand>
        <name>ATP</name>
        <dbReference type="ChEBI" id="CHEBI:30616"/>
    </ligand>
</feature>
<feature type="splice variant" id="VSP_021872" description="In isoform 2." evidence="4">
    <original>GCSPSDIGVIAPYRQQLRIISDLLARSSVGMVEVN</original>
    <variation>AAPQTLASSPRTDSSCGSSATYWPGLLLGWLRLTQ</variation>
    <location>
        <begin position="932"/>
        <end position="966"/>
    </location>
</feature>
<feature type="splice variant" id="VSP_021873" description="In isoform 2." evidence="4">
    <location>
        <begin position="967"/>
        <end position="1062"/>
    </location>
</feature>
<feature type="sequence conflict" description="In Ref. 2; BAC25919." evidence="5" ref="2">
    <original>I</original>
    <variation>K</variation>
    <location>
        <position position="285"/>
    </location>
</feature>
<feature type="sequence conflict" description="In Ref. 3; AAH25182." evidence="5" ref="3">
    <original>P</original>
    <variation>L</variation>
    <location>
        <position position="375"/>
    </location>
</feature>
<feature type="sequence conflict" description="In Ref. 3; AAH25182." evidence="5" ref="3">
    <original>I</original>
    <variation>M</variation>
    <location>
        <position position="400"/>
    </location>
</feature>
<feature type="sequence conflict" description="In Ref. 3; AAH25182." evidence="5" ref="3">
    <original>T</original>
    <variation>M</variation>
    <location>
        <position position="486"/>
    </location>
</feature>
<feature type="sequence conflict" description="In Ref. 3; AAH25182." evidence="5" ref="3">
    <original>A</original>
    <variation>V</variation>
    <location>
        <position position="543"/>
    </location>
</feature>
<feature type="sequence conflict" description="In Ref. 3; AAH25182." evidence="5" ref="3">
    <original>P</original>
    <variation>S</variation>
    <location>
        <position position="881"/>
    </location>
</feature>
<feature type="sequence conflict" description="In Ref. 3; AAH25182." evidence="5" ref="3">
    <original>R</original>
    <variation>Q</variation>
    <location>
        <position position="957"/>
    </location>
</feature>
<feature type="sequence conflict" description="In Ref. 3; AAH25182." evidence="5" ref="3">
    <original>A</original>
    <variation>T</variation>
    <location>
        <position position="1037"/>
    </location>
</feature>
<feature type="helix" evidence="6">
    <location>
        <begin position="4"/>
        <end position="9"/>
    </location>
</feature>
<feature type="helix" evidence="6">
    <location>
        <begin position="23"/>
        <end position="34"/>
    </location>
</feature>
<feature type="helix" evidence="7">
    <location>
        <begin position="43"/>
        <end position="45"/>
    </location>
</feature>
<feature type="strand" evidence="6">
    <location>
        <begin position="47"/>
        <end position="57"/>
    </location>
</feature>
<feature type="strand" evidence="6">
    <location>
        <begin position="59"/>
        <end position="74"/>
    </location>
</feature>
<feature type="strand" evidence="6">
    <location>
        <begin position="79"/>
        <end position="83"/>
    </location>
</feature>
<feature type="helix" evidence="6">
    <location>
        <begin position="85"/>
        <end position="89"/>
    </location>
</feature>
<feature type="strand" evidence="6">
    <location>
        <begin position="97"/>
        <end position="102"/>
    </location>
</feature>
<feature type="strand" evidence="6">
    <location>
        <begin position="106"/>
        <end position="111"/>
    </location>
</feature>
<feature type="strand" evidence="6">
    <location>
        <begin position="113"/>
        <end position="115"/>
    </location>
</feature>
<feature type="strand" evidence="6">
    <location>
        <begin position="117"/>
        <end position="121"/>
    </location>
</feature>
<feature type="helix" evidence="6">
    <location>
        <begin position="128"/>
        <end position="133"/>
    </location>
</feature>
<feature type="turn" evidence="6">
    <location>
        <begin position="134"/>
        <end position="136"/>
    </location>
</feature>
<feature type="helix" evidence="6">
    <location>
        <begin position="138"/>
        <end position="146"/>
    </location>
</feature>
<feature type="helix" evidence="8">
    <location>
        <begin position="148"/>
        <end position="150"/>
    </location>
</feature>
<feature type="helix" evidence="6">
    <location>
        <begin position="155"/>
        <end position="172"/>
    </location>
</feature>
<feature type="helix" evidence="6">
    <location>
        <begin position="177"/>
        <end position="188"/>
    </location>
</feature>
<feature type="helix" evidence="6">
    <location>
        <begin position="191"/>
        <end position="200"/>
    </location>
</feature>
<feature type="helix" evidence="6">
    <location>
        <begin position="204"/>
        <end position="225"/>
    </location>
</feature>
<feature type="helix" evidence="6">
    <location>
        <begin position="231"/>
        <end position="233"/>
    </location>
</feature>
<feature type="strand" evidence="6">
    <location>
        <begin position="252"/>
        <end position="268"/>
    </location>
</feature>
<feature type="turn" evidence="6">
    <location>
        <begin position="269"/>
        <end position="272"/>
    </location>
</feature>
<feature type="strand" evidence="6">
    <location>
        <begin position="273"/>
        <end position="287"/>
    </location>
</feature>
<feature type="strand" evidence="6">
    <location>
        <begin position="290"/>
        <end position="301"/>
    </location>
</feature>
<feature type="helix" evidence="6">
    <location>
        <begin position="309"/>
        <end position="322"/>
    </location>
</feature>
<feature type="turn" evidence="6">
    <location>
        <begin position="323"/>
        <end position="325"/>
    </location>
</feature>
<feature type="strand" evidence="6">
    <location>
        <begin position="330"/>
        <end position="336"/>
    </location>
</feature>
<feature type="turn" evidence="6">
    <location>
        <begin position="337"/>
        <end position="339"/>
    </location>
</feature>
<feature type="strand" evidence="6">
    <location>
        <begin position="342"/>
        <end position="346"/>
    </location>
</feature>
<feature type="helix" evidence="6">
    <location>
        <begin position="349"/>
        <end position="367"/>
    </location>
</feature>
<feature type="strand" evidence="6">
    <location>
        <begin position="370"/>
        <end position="374"/>
    </location>
</feature>
<feature type="strand" evidence="6">
    <location>
        <begin position="379"/>
        <end position="381"/>
    </location>
</feature>
<feature type="helix" evidence="6">
    <location>
        <begin position="391"/>
        <end position="395"/>
    </location>
</feature>
<feature type="helix" evidence="6">
    <location>
        <begin position="400"/>
        <end position="409"/>
    </location>
</feature>
<feature type="helix" evidence="6">
    <location>
        <begin position="421"/>
        <end position="431"/>
    </location>
</feature>
<feature type="helix" evidence="6">
    <location>
        <begin position="436"/>
        <end position="453"/>
    </location>
</feature>
<feature type="helix" evidence="6">
    <location>
        <begin position="456"/>
        <end position="458"/>
    </location>
</feature>
<feature type="helix" evidence="6">
    <location>
        <begin position="463"/>
        <end position="466"/>
    </location>
</feature>
<feature type="helix" evidence="6">
    <location>
        <begin position="470"/>
        <end position="474"/>
    </location>
</feature>
<feature type="strand" evidence="6">
    <location>
        <begin position="475"/>
        <end position="484"/>
    </location>
</feature>
<feature type="strand" evidence="6">
    <location>
        <begin position="490"/>
        <end position="493"/>
    </location>
</feature>
<feature type="strand" evidence="6">
    <location>
        <begin position="496"/>
        <end position="502"/>
    </location>
</feature>
<feature type="strand" evidence="6">
    <location>
        <begin position="504"/>
        <end position="506"/>
    </location>
</feature>
<feature type="strand" evidence="6">
    <location>
        <begin position="518"/>
        <end position="525"/>
    </location>
</feature>
<feature type="helix" evidence="6">
    <location>
        <begin position="526"/>
        <end position="528"/>
    </location>
</feature>
<feature type="strand" evidence="6">
    <location>
        <begin position="532"/>
        <end position="539"/>
    </location>
</feature>
<feature type="strand" evidence="6">
    <location>
        <begin position="541"/>
        <end position="550"/>
    </location>
</feature>
<feature type="strand" evidence="6">
    <location>
        <begin position="561"/>
        <end position="565"/>
    </location>
</feature>
<feature type="helix" evidence="7">
    <location>
        <begin position="570"/>
        <end position="572"/>
    </location>
</feature>
<feature type="helix" evidence="6">
    <location>
        <begin position="573"/>
        <end position="582"/>
    </location>
</feature>
<feature type="strand" evidence="6">
    <location>
        <begin position="584"/>
        <end position="586"/>
    </location>
</feature>
<feature type="helix" evidence="6">
    <location>
        <begin position="587"/>
        <end position="596"/>
    </location>
</feature>
<feature type="helix" evidence="6">
    <location>
        <begin position="609"/>
        <end position="611"/>
    </location>
</feature>
<feature type="helix" evidence="6">
    <location>
        <begin position="614"/>
        <end position="616"/>
    </location>
</feature>
<feature type="helix" evidence="6">
    <location>
        <begin position="617"/>
        <end position="625"/>
    </location>
</feature>
<feature type="helix" evidence="6">
    <location>
        <begin position="629"/>
        <end position="640"/>
    </location>
</feature>
<feature type="strand" evidence="6">
    <location>
        <begin position="641"/>
        <end position="649"/>
    </location>
</feature>
<feature type="helix" evidence="6">
    <location>
        <begin position="655"/>
        <end position="668"/>
    </location>
</feature>
<feature type="strand" evidence="6">
    <location>
        <begin position="673"/>
        <end position="679"/>
    </location>
</feature>
<feature type="helix" evidence="6">
    <location>
        <begin position="680"/>
        <end position="692"/>
    </location>
</feature>
<feature type="helix" evidence="6">
    <location>
        <begin position="703"/>
        <end position="705"/>
    </location>
</feature>
<feature type="turn" evidence="6">
    <location>
        <begin position="708"/>
        <end position="710"/>
    </location>
</feature>
<feature type="helix" evidence="6">
    <location>
        <begin position="711"/>
        <end position="713"/>
    </location>
</feature>
<feature type="helix" evidence="6">
    <location>
        <begin position="715"/>
        <end position="721"/>
    </location>
</feature>
<feature type="helix" evidence="6">
    <location>
        <begin position="727"/>
        <end position="734"/>
    </location>
</feature>
<feature type="strand" evidence="6">
    <location>
        <begin position="738"/>
        <end position="743"/>
    </location>
</feature>
<feature type="helix" evidence="6">
    <location>
        <begin position="744"/>
        <end position="746"/>
    </location>
</feature>
<feature type="helix" evidence="6">
    <location>
        <begin position="750"/>
        <end position="753"/>
    </location>
</feature>
<feature type="strand" evidence="6">
    <location>
        <begin position="757"/>
        <end position="762"/>
    </location>
</feature>
<feature type="helix" evidence="6">
    <location>
        <begin position="765"/>
        <end position="767"/>
    </location>
</feature>
<feature type="helix" evidence="6">
    <location>
        <begin position="770"/>
        <end position="773"/>
    </location>
</feature>
<feature type="helix" evidence="6">
    <location>
        <begin position="775"/>
        <end position="779"/>
    </location>
</feature>
<feature type="strand" evidence="6">
    <location>
        <begin position="780"/>
        <end position="787"/>
    </location>
</feature>
<feature type="helix" evidence="6">
    <location>
        <begin position="799"/>
        <end position="803"/>
    </location>
</feature>
<feature type="turn" evidence="6">
    <location>
        <begin position="804"/>
        <end position="807"/>
    </location>
</feature>
<feature type="helix" evidence="6">
    <location>
        <begin position="810"/>
        <end position="814"/>
    </location>
</feature>
<feature type="helix" evidence="6">
    <location>
        <begin position="818"/>
        <end position="820"/>
    </location>
</feature>
<feature type="strand" evidence="6">
    <location>
        <begin position="821"/>
        <end position="824"/>
    </location>
</feature>
<feature type="strand" evidence="6">
    <location>
        <begin position="826"/>
        <end position="830"/>
    </location>
</feature>
<feature type="helix" evidence="6">
    <location>
        <begin position="832"/>
        <end position="841"/>
    </location>
</feature>
<feature type="strand" evidence="6">
    <location>
        <begin position="848"/>
        <end position="851"/>
    </location>
</feature>
<feature type="helix" evidence="6">
    <location>
        <begin position="852"/>
        <end position="856"/>
    </location>
</feature>
<feature type="helix" evidence="6">
    <location>
        <begin position="864"/>
        <end position="871"/>
    </location>
</feature>
<feature type="turn" evidence="6">
    <location>
        <begin position="872"/>
        <end position="874"/>
    </location>
</feature>
<feature type="helix" evidence="6">
    <location>
        <begin position="881"/>
        <end position="887"/>
    </location>
</feature>
<feature type="strand" evidence="6">
    <location>
        <begin position="893"/>
        <end position="897"/>
    </location>
</feature>
<feature type="strand" evidence="6">
    <location>
        <begin position="899"/>
        <end position="901"/>
    </location>
</feature>
<feature type="strand" evidence="6">
    <location>
        <begin position="906"/>
        <end position="908"/>
    </location>
</feature>
<feature type="strand" evidence="6">
    <location>
        <begin position="911"/>
        <end position="913"/>
    </location>
</feature>
<feature type="helix" evidence="6">
    <location>
        <begin position="915"/>
        <end position="930"/>
    </location>
</feature>
<feature type="helix" evidence="6">
    <location>
        <begin position="935"/>
        <end position="937"/>
    </location>
</feature>
<feature type="strand" evidence="6">
    <location>
        <begin position="938"/>
        <end position="941"/>
    </location>
</feature>
<feature type="helix" evidence="6">
    <location>
        <begin position="945"/>
        <end position="957"/>
    </location>
</feature>
<feature type="strand" evidence="6">
    <location>
        <begin position="963"/>
        <end position="966"/>
    </location>
</feature>
<feature type="helix" evidence="6">
    <location>
        <begin position="968"/>
        <end position="971"/>
    </location>
</feature>
<feature type="strand" evidence="6">
    <location>
        <begin position="976"/>
        <end position="982"/>
    </location>
</feature>
<feature type="strand" evidence="8">
    <location>
        <begin position="988"/>
        <end position="990"/>
    </location>
</feature>
<feature type="helix" evidence="6">
    <location>
        <begin position="995"/>
        <end position="997"/>
    </location>
</feature>
<feature type="helix" evidence="6">
    <location>
        <begin position="999"/>
        <end position="1006"/>
    </location>
</feature>
<feature type="strand" evidence="6">
    <location>
        <begin position="1008"/>
        <end position="1017"/>
    </location>
</feature>
<feature type="helix" evidence="6">
    <location>
        <begin position="1019"/>
        <end position="1022"/>
    </location>
</feature>
<feature type="helix" evidence="6">
    <location>
        <begin position="1026"/>
        <end position="1036"/>
    </location>
</feature>
<feature type="turn" evidence="6">
    <location>
        <begin position="1037"/>
        <end position="1039"/>
    </location>
</feature>
<feature type="strand" evidence="6">
    <location>
        <begin position="1041"/>
        <end position="1043"/>
    </location>
</feature>
<feature type="helix" evidence="6">
    <location>
        <begin position="1050"/>
        <end position="1053"/>
    </location>
</feature>
<name>DNA2_MOUSE</name>
<keyword id="KW-0002">3D-structure</keyword>
<keyword id="KW-0004">4Fe-4S</keyword>
<keyword id="KW-0007">Acetylation</keyword>
<keyword id="KW-0025">Alternative splicing</keyword>
<keyword id="KW-0067">ATP-binding</keyword>
<keyword id="KW-0227">DNA damage</keyword>
<keyword id="KW-0234">DNA repair</keyword>
<keyword id="KW-0235">DNA replication</keyword>
<keyword id="KW-0238">DNA-binding</keyword>
<keyword id="KW-0255">Endonuclease</keyword>
<keyword id="KW-0347">Helicase</keyword>
<keyword id="KW-0378">Hydrolase</keyword>
<keyword id="KW-0408">Iron</keyword>
<keyword id="KW-0411">Iron-sulfur</keyword>
<keyword id="KW-0479">Metal-binding</keyword>
<keyword id="KW-0496">Mitochondrion</keyword>
<keyword id="KW-0511">Multifunctional enzyme</keyword>
<keyword id="KW-0540">Nuclease</keyword>
<keyword id="KW-0547">Nucleotide-binding</keyword>
<keyword id="KW-0539">Nucleus</keyword>
<keyword id="KW-1185">Reference proteome</keyword>
<reference key="1">
    <citation type="journal article" date="2003" name="DNA Res.">
        <title>Prediction of the coding sequences of mouse homologues of KIAA gene: III. The complete nucleotide sequences of 500 mouse KIAA-homologous cDNAs identified by screening of terminal sequences of cDNA clones randomly sampled from size-fractionated libraries.</title>
        <authorList>
            <person name="Okazaki N."/>
            <person name="Kikuno R."/>
            <person name="Ohara R."/>
            <person name="Inamoto S."/>
            <person name="Koseki H."/>
            <person name="Hiraoka S."/>
            <person name="Saga Y."/>
            <person name="Nagase T."/>
            <person name="Ohara O."/>
            <person name="Koga H."/>
        </authorList>
    </citation>
    <scope>NUCLEOTIDE SEQUENCE [LARGE SCALE MRNA] (ISOFORM 1)</scope>
    <source>
        <tissue>Embryonic tail</tissue>
    </source>
</reference>
<reference key="2">
    <citation type="journal article" date="2005" name="Science">
        <title>The transcriptional landscape of the mammalian genome.</title>
        <authorList>
            <person name="Carninci P."/>
            <person name="Kasukawa T."/>
            <person name="Katayama S."/>
            <person name="Gough J."/>
            <person name="Frith M.C."/>
            <person name="Maeda N."/>
            <person name="Oyama R."/>
            <person name="Ravasi T."/>
            <person name="Lenhard B."/>
            <person name="Wells C."/>
            <person name="Kodzius R."/>
            <person name="Shimokawa K."/>
            <person name="Bajic V.B."/>
            <person name="Brenner S.E."/>
            <person name="Batalov S."/>
            <person name="Forrest A.R."/>
            <person name="Zavolan M."/>
            <person name="Davis M.J."/>
            <person name="Wilming L.G."/>
            <person name="Aidinis V."/>
            <person name="Allen J.E."/>
            <person name="Ambesi-Impiombato A."/>
            <person name="Apweiler R."/>
            <person name="Aturaliya R.N."/>
            <person name="Bailey T.L."/>
            <person name="Bansal M."/>
            <person name="Baxter L."/>
            <person name="Beisel K.W."/>
            <person name="Bersano T."/>
            <person name="Bono H."/>
            <person name="Chalk A.M."/>
            <person name="Chiu K.P."/>
            <person name="Choudhary V."/>
            <person name="Christoffels A."/>
            <person name="Clutterbuck D.R."/>
            <person name="Crowe M.L."/>
            <person name="Dalla E."/>
            <person name="Dalrymple B.P."/>
            <person name="de Bono B."/>
            <person name="Della Gatta G."/>
            <person name="di Bernardo D."/>
            <person name="Down T."/>
            <person name="Engstrom P."/>
            <person name="Fagiolini M."/>
            <person name="Faulkner G."/>
            <person name="Fletcher C.F."/>
            <person name="Fukushima T."/>
            <person name="Furuno M."/>
            <person name="Futaki S."/>
            <person name="Gariboldi M."/>
            <person name="Georgii-Hemming P."/>
            <person name="Gingeras T.R."/>
            <person name="Gojobori T."/>
            <person name="Green R.E."/>
            <person name="Gustincich S."/>
            <person name="Harbers M."/>
            <person name="Hayashi Y."/>
            <person name="Hensch T.K."/>
            <person name="Hirokawa N."/>
            <person name="Hill D."/>
            <person name="Huminiecki L."/>
            <person name="Iacono M."/>
            <person name="Ikeo K."/>
            <person name="Iwama A."/>
            <person name="Ishikawa T."/>
            <person name="Jakt M."/>
            <person name="Kanapin A."/>
            <person name="Katoh M."/>
            <person name="Kawasawa Y."/>
            <person name="Kelso J."/>
            <person name="Kitamura H."/>
            <person name="Kitano H."/>
            <person name="Kollias G."/>
            <person name="Krishnan S.P."/>
            <person name="Kruger A."/>
            <person name="Kummerfeld S.K."/>
            <person name="Kurochkin I.V."/>
            <person name="Lareau L.F."/>
            <person name="Lazarevic D."/>
            <person name="Lipovich L."/>
            <person name="Liu J."/>
            <person name="Liuni S."/>
            <person name="McWilliam S."/>
            <person name="Madan Babu M."/>
            <person name="Madera M."/>
            <person name="Marchionni L."/>
            <person name="Matsuda H."/>
            <person name="Matsuzawa S."/>
            <person name="Miki H."/>
            <person name="Mignone F."/>
            <person name="Miyake S."/>
            <person name="Morris K."/>
            <person name="Mottagui-Tabar S."/>
            <person name="Mulder N."/>
            <person name="Nakano N."/>
            <person name="Nakauchi H."/>
            <person name="Ng P."/>
            <person name="Nilsson R."/>
            <person name="Nishiguchi S."/>
            <person name="Nishikawa S."/>
            <person name="Nori F."/>
            <person name="Ohara O."/>
            <person name="Okazaki Y."/>
            <person name="Orlando V."/>
            <person name="Pang K.C."/>
            <person name="Pavan W.J."/>
            <person name="Pavesi G."/>
            <person name="Pesole G."/>
            <person name="Petrovsky N."/>
            <person name="Piazza S."/>
            <person name="Reed J."/>
            <person name="Reid J.F."/>
            <person name="Ring B.Z."/>
            <person name="Ringwald M."/>
            <person name="Rost B."/>
            <person name="Ruan Y."/>
            <person name="Salzberg S.L."/>
            <person name="Sandelin A."/>
            <person name="Schneider C."/>
            <person name="Schoenbach C."/>
            <person name="Sekiguchi K."/>
            <person name="Semple C.A."/>
            <person name="Seno S."/>
            <person name="Sessa L."/>
            <person name="Sheng Y."/>
            <person name="Shibata Y."/>
            <person name="Shimada H."/>
            <person name="Shimada K."/>
            <person name="Silva D."/>
            <person name="Sinclair B."/>
            <person name="Sperling S."/>
            <person name="Stupka E."/>
            <person name="Sugiura K."/>
            <person name="Sultana R."/>
            <person name="Takenaka Y."/>
            <person name="Taki K."/>
            <person name="Tammoja K."/>
            <person name="Tan S.L."/>
            <person name="Tang S."/>
            <person name="Taylor M.S."/>
            <person name="Tegner J."/>
            <person name="Teichmann S.A."/>
            <person name="Ueda H.R."/>
            <person name="van Nimwegen E."/>
            <person name="Verardo R."/>
            <person name="Wei C.L."/>
            <person name="Yagi K."/>
            <person name="Yamanishi H."/>
            <person name="Zabarovsky E."/>
            <person name="Zhu S."/>
            <person name="Zimmer A."/>
            <person name="Hide W."/>
            <person name="Bult C."/>
            <person name="Grimmond S.M."/>
            <person name="Teasdale R.D."/>
            <person name="Liu E.T."/>
            <person name="Brusic V."/>
            <person name="Quackenbush J."/>
            <person name="Wahlestedt C."/>
            <person name="Mattick J.S."/>
            <person name="Hume D.A."/>
            <person name="Kai C."/>
            <person name="Sasaki D."/>
            <person name="Tomaru Y."/>
            <person name="Fukuda S."/>
            <person name="Kanamori-Katayama M."/>
            <person name="Suzuki M."/>
            <person name="Aoki J."/>
            <person name="Arakawa T."/>
            <person name="Iida J."/>
            <person name="Imamura K."/>
            <person name="Itoh M."/>
            <person name="Kato T."/>
            <person name="Kawaji H."/>
            <person name="Kawagashira N."/>
            <person name="Kawashima T."/>
            <person name="Kojima M."/>
            <person name="Kondo S."/>
            <person name="Konno H."/>
            <person name="Nakano K."/>
            <person name="Ninomiya N."/>
            <person name="Nishio T."/>
            <person name="Okada M."/>
            <person name="Plessy C."/>
            <person name="Shibata K."/>
            <person name="Shiraki T."/>
            <person name="Suzuki S."/>
            <person name="Tagami M."/>
            <person name="Waki K."/>
            <person name="Watahiki A."/>
            <person name="Okamura-Oho Y."/>
            <person name="Suzuki H."/>
            <person name="Kawai J."/>
            <person name="Hayashizaki Y."/>
        </authorList>
    </citation>
    <scope>NUCLEOTIDE SEQUENCE [LARGE SCALE MRNA] (ISOFORM 1)</scope>
    <source>
        <strain>C57BL/6J</strain>
    </source>
</reference>
<reference key="3">
    <citation type="journal article" date="2004" name="Genome Res.">
        <title>The status, quality, and expansion of the NIH full-length cDNA project: the Mammalian Gene Collection (MGC).</title>
        <authorList>
            <consortium name="The MGC Project Team"/>
        </authorList>
    </citation>
    <scope>NUCLEOTIDE SEQUENCE [LARGE SCALE MRNA] (ISOFORM 2)</scope>
    <scope>NUCLEOTIDE SEQUENCE [LARGE SCALE MRNA] OF 263-1078 (ISOFORM 1)</scope>
    <source>
        <strain>Czech II</strain>
        <tissue>Mammary tumor</tissue>
    </source>
</reference>
<proteinExistence type="evidence at protein level"/>
<gene>
    <name type="primary">Dna2</name>
    <name type="synonym">Dna2l</name>
    <name type="synonym">Kiaa0083</name>
</gene>
<organism>
    <name type="scientific">Mus musculus</name>
    <name type="common">Mouse</name>
    <dbReference type="NCBI Taxonomy" id="10090"/>
    <lineage>
        <taxon>Eukaryota</taxon>
        <taxon>Metazoa</taxon>
        <taxon>Chordata</taxon>
        <taxon>Craniata</taxon>
        <taxon>Vertebrata</taxon>
        <taxon>Euteleostomi</taxon>
        <taxon>Mammalia</taxon>
        <taxon>Eutheria</taxon>
        <taxon>Euarchontoglires</taxon>
        <taxon>Glires</taxon>
        <taxon>Rodentia</taxon>
        <taxon>Myomorpha</taxon>
        <taxon>Muroidea</taxon>
        <taxon>Muridae</taxon>
        <taxon>Murinae</taxon>
        <taxon>Mus</taxon>
        <taxon>Mus</taxon>
    </lineage>
</organism>
<accession>Q6ZQJ5</accession>
<accession>Q14BM9</accession>
<accession>Q8BSZ0</accession>
<accession>Q8R3J3</accession>
<protein>
    <recommendedName>
        <fullName>DNA replication ATP-dependent helicase/nuclease DNA2</fullName>
    </recommendedName>
    <alternativeName>
        <fullName>DNA replication ATP-dependent helicase-like homolog</fullName>
    </alternativeName>
    <domain>
        <recommendedName>
            <fullName>DNA replication nuclease DNA2</fullName>
            <ecNumber>3.1.-.-</ecNumber>
        </recommendedName>
    </domain>
    <domain>
        <recommendedName>
            <fullName>DNA replication ATP-dependent helicase DNA2</fullName>
            <ecNumber>3.6.4.12</ecNumber>
        </recommendedName>
    </domain>
</protein>